<protein>
    <recommendedName>
        <fullName evidence="1">DNA protection during starvation protein</fullName>
        <ecNumber evidence="1">1.16.-.-</ecNumber>
    </recommendedName>
</protein>
<proteinExistence type="inferred from homology"/>
<reference key="1">
    <citation type="journal article" date="2009" name="PLoS Genet.">
        <title>Organised genome dynamics in the Escherichia coli species results in highly diverse adaptive paths.</title>
        <authorList>
            <person name="Touchon M."/>
            <person name="Hoede C."/>
            <person name="Tenaillon O."/>
            <person name="Barbe V."/>
            <person name="Baeriswyl S."/>
            <person name="Bidet P."/>
            <person name="Bingen E."/>
            <person name="Bonacorsi S."/>
            <person name="Bouchier C."/>
            <person name="Bouvet O."/>
            <person name="Calteau A."/>
            <person name="Chiapello H."/>
            <person name="Clermont O."/>
            <person name="Cruveiller S."/>
            <person name="Danchin A."/>
            <person name="Diard M."/>
            <person name="Dossat C."/>
            <person name="Karoui M.E."/>
            <person name="Frapy E."/>
            <person name="Garry L."/>
            <person name="Ghigo J.M."/>
            <person name="Gilles A.M."/>
            <person name="Johnson J."/>
            <person name="Le Bouguenec C."/>
            <person name="Lescat M."/>
            <person name="Mangenot S."/>
            <person name="Martinez-Jehanne V."/>
            <person name="Matic I."/>
            <person name="Nassif X."/>
            <person name="Oztas S."/>
            <person name="Petit M.A."/>
            <person name="Pichon C."/>
            <person name="Rouy Z."/>
            <person name="Ruf C.S."/>
            <person name="Schneider D."/>
            <person name="Tourret J."/>
            <person name="Vacherie B."/>
            <person name="Vallenet D."/>
            <person name="Medigue C."/>
            <person name="Rocha E.P.C."/>
            <person name="Denamur E."/>
        </authorList>
    </citation>
    <scope>NUCLEOTIDE SEQUENCE [LARGE SCALE GENOMIC DNA]</scope>
    <source>
        <strain>UMN026 / ExPEC</strain>
    </source>
</reference>
<gene>
    <name evidence="1" type="primary">dps</name>
    <name type="ordered locus">ECUMN_0956</name>
</gene>
<sequence>MSTAKLVKSKATNLLYTRNDVSDSEKKATVELLNRQVIQFIDLSLITKQAHWNMRGANFIAVHEMLDGFRTALIDHLDTMAERAVQLGGVALGTTQVINSKTPLKSYPLDIHNVQDHLKELADRYAIVANDVRKAIGEAKDDDTADILTAASRDLDKFLWFIESNIE</sequence>
<comment type="function">
    <text evidence="1">During stationary phase, binds the chromosome non-specifically, forming a highly ordered and stable dps-DNA co-crystal within which chromosomal DNA is condensed and protected from diverse damages. It protects DNA from oxidative damage by sequestering intracellular Fe(2+) ion and storing it in the form of Fe(3+) oxyhydroxide mineral, which can be released after reduction. One hydrogen peroxide oxidizes two Fe(2+) ions, which prevents hydroxyl radical production by the Fenton reaction. Dps also protects the cell from UV and gamma irradiation, iron and copper toxicity, thermal stress and acid and base shocks. Also shows a weak catalase activity.</text>
</comment>
<comment type="catalytic activity">
    <reaction evidence="1">
        <text>2 Fe(2+) + H2O2 + 2 H(+) = 2 Fe(3+) + 2 H2O</text>
        <dbReference type="Rhea" id="RHEA:48712"/>
        <dbReference type="ChEBI" id="CHEBI:15377"/>
        <dbReference type="ChEBI" id="CHEBI:15378"/>
        <dbReference type="ChEBI" id="CHEBI:16240"/>
        <dbReference type="ChEBI" id="CHEBI:29033"/>
        <dbReference type="ChEBI" id="CHEBI:29034"/>
    </reaction>
</comment>
<comment type="subunit">
    <text evidence="1">Homododecamer. The 12 subunits form a hollow sphere into which the mineral iron core of up to 500 Fe(3+) can be deposited.</text>
</comment>
<comment type="subcellular location">
    <subcellularLocation>
        <location evidence="1">Cytoplasm</location>
        <location evidence="1">Nucleoid</location>
    </subcellularLocation>
</comment>
<comment type="similarity">
    <text evidence="1">Belongs to the Dps family.</text>
</comment>
<dbReference type="EC" id="1.16.-.-" evidence="1"/>
<dbReference type="EMBL" id="CU928163">
    <property type="protein sequence ID" value="CAR12165.1"/>
    <property type="molecule type" value="Genomic_DNA"/>
</dbReference>
<dbReference type="RefSeq" id="WP_000100800.1">
    <property type="nucleotide sequence ID" value="NC_011751.1"/>
</dbReference>
<dbReference type="RefSeq" id="YP_002411709.1">
    <property type="nucleotide sequence ID" value="NC_011751.1"/>
</dbReference>
<dbReference type="SMR" id="B7NAB2"/>
<dbReference type="STRING" id="585056.ECUMN_0956"/>
<dbReference type="GeneID" id="93776616"/>
<dbReference type="KEGG" id="eum:ECUMN_0956"/>
<dbReference type="PATRIC" id="fig|585056.7.peg.1151"/>
<dbReference type="HOGENOM" id="CLU_098183_1_2_6"/>
<dbReference type="Proteomes" id="UP000007097">
    <property type="component" value="Chromosome"/>
</dbReference>
<dbReference type="GO" id="GO:0005737">
    <property type="term" value="C:cytoplasm"/>
    <property type="evidence" value="ECO:0007669"/>
    <property type="project" value="UniProtKB-UniRule"/>
</dbReference>
<dbReference type="GO" id="GO:0009295">
    <property type="term" value="C:nucleoid"/>
    <property type="evidence" value="ECO:0007669"/>
    <property type="project" value="UniProtKB-SubCell"/>
</dbReference>
<dbReference type="GO" id="GO:0003677">
    <property type="term" value="F:DNA binding"/>
    <property type="evidence" value="ECO:0007669"/>
    <property type="project" value="UniProtKB-UniRule"/>
</dbReference>
<dbReference type="GO" id="GO:0008199">
    <property type="term" value="F:ferric iron binding"/>
    <property type="evidence" value="ECO:0007669"/>
    <property type="project" value="UniProtKB-UniRule"/>
</dbReference>
<dbReference type="GO" id="GO:0016722">
    <property type="term" value="F:oxidoreductase activity, acting on metal ions"/>
    <property type="evidence" value="ECO:0007669"/>
    <property type="project" value="InterPro"/>
</dbReference>
<dbReference type="GO" id="GO:0030261">
    <property type="term" value="P:chromosome condensation"/>
    <property type="evidence" value="ECO:0007669"/>
    <property type="project" value="UniProtKB-KW"/>
</dbReference>
<dbReference type="GO" id="GO:0006879">
    <property type="term" value="P:intracellular iron ion homeostasis"/>
    <property type="evidence" value="ECO:0007669"/>
    <property type="project" value="UniProtKB-KW"/>
</dbReference>
<dbReference type="CDD" id="cd01043">
    <property type="entry name" value="DPS"/>
    <property type="match status" value="1"/>
</dbReference>
<dbReference type="FunFam" id="1.20.1260.10:FF:000003">
    <property type="entry name" value="DNA protection during starvation protein"/>
    <property type="match status" value="1"/>
</dbReference>
<dbReference type="Gene3D" id="1.20.1260.10">
    <property type="match status" value="1"/>
</dbReference>
<dbReference type="HAMAP" id="MF_01441">
    <property type="entry name" value="Dps"/>
    <property type="match status" value="1"/>
</dbReference>
<dbReference type="InterPro" id="IPR002177">
    <property type="entry name" value="DPS_DNA-bd"/>
</dbReference>
<dbReference type="InterPro" id="IPR023188">
    <property type="entry name" value="DPS_DNA-bd_CS"/>
</dbReference>
<dbReference type="InterPro" id="IPR023067">
    <property type="entry name" value="Dps_gammaproteobac"/>
</dbReference>
<dbReference type="InterPro" id="IPR012347">
    <property type="entry name" value="Ferritin-like"/>
</dbReference>
<dbReference type="InterPro" id="IPR009078">
    <property type="entry name" value="Ferritin-like_SF"/>
</dbReference>
<dbReference type="InterPro" id="IPR008331">
    <property type="entry name" value="Ferritin_DPS_dom"/>
</dbReference>
<dbReference type="NCBIfam" id="NF006975">
    <property type="entry name" value="PRK09448.1"/>
    <property type="match status" value="1"/>
</dbReference>
<dbReference type="PANTHER" id="PTHR42932:SF3">
    <property type="entry name" value="DNA PROTECTION DURING STARVATION PROTEIN"/>
    <property type="match status" value="1"/>
</dbReference>
<dbReference type="PANTHER" id="PTHR42932">
    <property type="entry name" value="GENERAL STRESS PROTEIN 20U"/>
    <property type="match status" value="1"/>
</dbReference>
<dbReference type="Pfam" id="PF00210">
    <property type="entry name" value="Ferritin"/>
    <property type="match status" value="1"/>
</dbReference>
<dbReference type="PIRSF" id="PIRSF005900">
    <property type="entry name" value="Dps"/>
    <property type="match status" value="1"/>
</dbReference>
<dbReference type="PRINTS" id="PR01346">
    <property type="entry name" value="HELNAPAPROT"/>
</dbReference>
<dbReference type="SUPFAM" id="SSF47240">
    <property type="entry name" value="Ferritin-like"/>
    <property type="match status" value="1"/>
</dbReference>
<dbReference type="PROSITE" id="PS00818">
    <property type="entry name" value="DPS_1"/>
    <property type="match status" value="1"/>
</dbReference>
<dbReference type="PROSITE" id="PS00819">
    <property type="entry name" value="DPS_2"/>
    <property type="match status" value="1"/>
</dbReference>
<name>DPS_ECOLU</name>
<keyword id="KW-0963">Cytoplasm</keyword>
<keyword id="KW-0226">DNA condensation</keyword>
<keyword id="KW-0238">DNA-binding</keyword>
<keyword id="KW-0408">Iron</keyword>
<keyword id="KW-0409">Iron storage</keyword>
<keyword id="KW-0479">Metal-binding</keyword>
<keyword id="KW-0560">Oxidoreductase</keyword>
<feature type="chain" id="PRO_1000145903" description="DNA protection during starvation protein">
    <location>
        <begin position="1"/>
        <end position="167"/>
    </location>
</feature>
<feature type="binding site" evidence="1">
    <location>
        <position position="51"/>
    </location>
    <ligand>
        <name>Fe cation</name>
        <dbReference type="ChEBI" id="CHEBI:24875"/>
        <label>1</label>
        <note>ligand shared between two neighboring subunits</note>
    </ligand>
</feature>
<feature type="binding site" description="in other chain" evidence="1">
    <location>
        <position position="78"/>
    </location>
    <ligand>
        <name>Fe cation</name>
        <dbReference type="ChEBI" id="CHEBI:24875"/>
        <label>1</label>
        <note>ligand shared between two neighboring subunits</note>
    </ligand>
</feature>
<feature type="binding site" description="in other chain" evidence="1">
    <location>
        <position position="82"/>
    </location>
    <ligand>
        <name>Fe cation</name>
        <dbReference type="ChEBI" id="CHEBI:24875"/>
        <label>1</label>
        <note>ligand shared between two neighboring subunits</note>
    </ligand>
</feature>
<feature type="binding site" evidence="1">
    <location>
        <position position="82"/>
    </location>
    <ligand>
        <name>Fe cation</name>
        <dbReference type="ChEBI" id="CHEBI:24875"/>
        <label>2</label>
    </ligand>
</feature>
<evidence type="ECO:0000255" key="1">
    <source>
        <dbReference type="HAMAP-Rule" id="MF_01441"/>
    </source>
</evidence>
<accession>B7NAB2</accession>
<organism>
    <name type="scientific">Escherichia coli O17:K52:H18 (strain UMN026 / ExPEC)</name>
    <dbReference type="NCBI Taxonomy" id="585056"/>
    <lineage>
        <taxon>Bacteria</taxon>
        <taxon>Pseudomonadati</taxon>
        <taxon>Pseudomonadota</taxon>
        <taxon>Gammaproteobacteria</taxon>
        <taxon>Enterobacterales</taxon>
        <taxon>Enterobacteriaceae</taxon>
        <taxon>Escherichia</taxon>
    </lineage>
</organism>